<gene>
    <name evidence="1" type="primary">ispD</name>
    <name type="ordered locus">HD_1329</name>
</gene>
<dbReference type="EC" id="2.7.7.60" evidence="1"/>
<dbReference type="EMBL" id="AE017143">
    <property type="protein sequence ID" value="AAP96150.1"/>
    <property type="molecule type" value="Genomic_DNA"/>
</dbReference>
<dbReference type="RefSeq" id="WP_010945199.1">
    <property type="nucleotide sequence ID" value="NC_002940.2"/>
</dbReference>
<dbReference type="SMR" id="Q7VLT5"/>
<dbReference type="STRING" id="233412.HD_1329"/>
<dbReference type="KEGG" id="hdu:HD_1329"/>
<dbReference type="eggNOG" id="COG1211">
    <property type="taxonomic scope" value="Bacteria"/>
</dbReference>
<dbReference type="HOGENOM" id="CLU_061281_3_1_6"/>
<dbReference type="OrthoDB" id="9806837at2"/>
<dbReference type="UniPathway" id="UPA00056">
    <property type="reaction ID" value="UER00093"/>
</dbReference>
<dbReference type="Proteomes" id="UP000001022">
    <property type="component" value="Chromosome"/>
</dbReference>
<dbReference type="GO" id="GO:0050518">
    <property type="term" value="F:2-C-methyl-D-erythritol 4-phosphate cytidylyltransferase activity"/>
    <property type="evidence" value="ECO:0007669"/>
    <property type="project" value="UniProtKB-UniRule"/>
</dbReference>
<dbReference type="GO" id="GO:0019288">
    <property type="term" value="P:isopentenyl diphosphate biosynthetic process, methylerythritol 4-phosphate pathway"/>
    <property type="evidence" value="ECO:0007669"/>
    <property type="project" value="UniProtKB-UniRule"/>
</dbReference>
<dbReference type="CDD" id="cd02516">
    <property type="entry name" value="CDP-ME_synthetase"/>
    <property type="match status" value="1"/>
</dbReference>
<dbReference type="FunFam" id="3.90.550.10:FF:000003">
    <property type="entry name" value="2-C-methyl-D-erythritol 4-phosphate cytidylyltransferase"/>
    <property type="match status" value="1"/>
</dbReference>
<dbReference type="Gene3D" id="3.90.550.10">
    <property type="entry name" value="Spore Coat Polysaccharide Biosynthesis Protein SpsA, Chain A"/>
    <property type="match status" value="1"/>
</dbReference>
<dbReference type="HAMAP" id="MF_00108">
    <property type="entry name" value="IspD"/>
    <property type="match status" value="1"/>
</dbReference>
<dbReference type="InterPro" id="IPR001228">
    <property type="entry name" value="IspD"/>
</dbReference>
<dbReference type="InterPro" id="IPR034683">
    <property type="entry name" value="IspD/TarI"/>
</dbReference>
<dbReference type="InterPro" id="IPR050088">
    <property type="entry name" value="IspD/TarI_cytidylyltransf_bact"/>
</dbReference>
<dbReference type="InterPro" id="IPR029044">
    <property type="entry name" value="Nucleotide-diphossugar_trans"/>
</dbReference>
<dbReference type="NCBIfam" id="TIGR00453">
    <property type="entry name" value="ispD"/>
    <property type="match status" value="1"/>
</dbReference>
<dbReference type="PANTHER" id="PTHR32125">
    <property type="entry name" value="2-C-METHYL-D-ERYTHRITOL 4-PHOSPHATE CYTIDYLYLTRANSFERASE, CHLOROPLASTIC"/>
    <property type="match status" value="1"/>
</dbReference>
<dbReference type="PANTHER" id="PTHR32125:SF4">
    <property type="entry name" value="2-C-METHYL-D-ERYTHRITOL 4-PHOSPHATE CYTIDYLYLTRANSFERASE, CHLOROPLASTIC"/>
    <property type="match status" value="1"/>
</dbReference>
<dbReference type="Pfam" id="PF01128">
    <property type="entry name" value="IspD"/>
    <property type="match status" value="1"/>
</dbReference>
<dbReference type="SUPFAM" id="SSF53448">
    <property type="entry name" value="Nucleotide-diphospho-sugar transferases"/>
    <property type="match status" value="1"/>
</dbReference>
<sequence>MNRKIIAIIPASGIGSRMNAALPKQYLTLQGKTILEHTVAIFLNHPQIDKIVIALSANDQHHQHISLLTSDKIQLVNGGASRAESVFNALQSIDEHSWALVHDAARPCLKRSDLDKLLQITDQNGAILASPVVDTLKRAEGNKISHTEDRTTLWHALTPQFFPTALLKQALQQAFDRQQNVTDEASAMELAGYQPTLITGSNSNLKITRPEDLALAEFYLMHSLEK</sequence>
<evidence type="ECO:0000255" key="1">
    <source>
        <dbReference type="HAMAP-Rule" id="MF_00108"/>
    </source>
</evidence>
<protein>
    <recommendedName>
        <fullName evidence="1">2-C-methyl-D-erythritol 4-phosphate cytidylyltransferase</fullName>
        <ecNumber evidence="1">2.7.7.60</ecNumber>
    </recommendedName>
    <alternativeName>
        <fullName evidence="1">4-diphosphocytidyl-2C-methyl-D-erythritol synthase</fullName>
    </alternativeName>
    <alternativeName>
        <fullName evidence="1">MEP cytidylyltransferase</fullName>
        <shortName evidence="1">MCT</shortName>
    </alternativeName>
</protein>
<accession>Q7VLT5</accession>
<proteinExistence type="inferred from homology"/>
<comment type="function">
    <text evidence="1">Catalyzes the formation of 4-diphosphocytidyl-2-C-methyl-D-erythritol from CTP and 2-C-methyl-D-erythritol 4-phosphate (MEP).</text>
</comment>
<comment type="catalytic activity">
    <reaction evidence="1">
        <text>2-C-methyl-D-erythritol 4-phosphate + CTP + H(+) = 4-CDP-2-C-methyl-D-erythritol + diphosphate</text>
        <dbReference type="Rhea" id="RHEA:13429"/>
        <dbReference type="ChEBI" id="CHEBI:15378"/>
        <dbReference type="ChEBI" id="CHEBI:33019"/>
        <dbReference type="ChEBI" id="CHEBI:37563"/>
        <dbReference type="ChEBI" id="CHEBI:57823"/>
        <dbReference type="ChEBI" id="CHEBI:58262"/>
        <dbReference type="EC" id="2.7.7.60"/>
    </reaction>
</comment>
<comment type="pathway">
    <text evidence="1">Isoprenoid biosynthesis; isopentenyl diphosphate biosynthesis via DXP pathway; isopentenyl diphosphate from 1-deoxy-D-xylulose 5-phosphate: step 2/6.</text>
</comment>
<comment type="similarity">
    <text evidence="1">Belongs to the IspD/TarI cytidylyltransferase family. IspD subfamily.</text>
</comment>
<reference key="1">
    <citation type="submission" date="2003-06" db="EMBL/GenBank/DDBJ databases">
        <title>The complete genome sequence of Haemophilus ducreyi.</title>
        <authorList>
            <person name="Munson R.S. Jr."/>
            <person name="Ray W.C."/>
            <person name="Mahairas G."/>
            <person name="Sabo P."/>
            <person name="Mungur R."/>
            <person name="Johnson L."/>
            <person name="Nguyen D."/>
            <person name="Wang J."/>
            <person name="Forst C."/>
            <person name="Hood L."/>
        </authorList>
    </citation>
    <scope>NUCLEOTIDE SEQUENCE [LARGE SCALE GENOMIC DNA]</scope>
    <source>
        <strain>35000HP / ATCC 700724</strain>
    </source>
</reference>
<feature type="chain" id="PRO_0000075578" description="2-C-methyl-D-erythritol 4-phosphate cytidylyltransferase">
    <location>
        <begin position="1"/>
        <end position="226"/>
    </location>
</feature>
<feature type="site" description="Transition state stabilizer" evidence="1">
    <location>
        <position position="17"/>
    </location>
</feature>
<feature type="site" description="Transition state stabilizer" evidence="1">
    <location>
        <position position="24"/>
    </location>
</feature>
<feature type="site" description="Positions MEP for the nucleophilic attack" evidence="1">
    <location>
        <position position="150"/>
    </location>
</feature>
<feature type="site" description="Positions MEP for the nucleophilic attack" evidence="1">
    <location>
        <position position="206"/>
    </location>
</feature>
<name>ISPD_HAEDU</name>
<keyword id="KW-0414">Isoprene biosynthesis</keyword>
<keyword id="KW-0548">Nucleotidyltransferase</keyword>
<keyword id="KW-1185">Reference proteome</keyword>
<keyword id="KW-0808">Transferase</keyword>
<organism>
    <name type="scientific">Haemophilus ducreyi (strain 35000HP / ATCC 700724)</name>
    <dbReference type="NCBI Taxonomy" id="233412"/>
    <lineage>
        <taxon>Bacteria</taxon>
        <taxon>Pseudomonadati</taxon>
        <taxon>Pseudomonadota</taxon>
        <taxon>Gammaproteobacteria</taxon>
        <taxon>Pasteurellales</taxon>
        <taxon>Pasteurellaceae</taxon>
        <taxon>Haemophilus</taxon>
    </lineage>
</organism>